<feature type="chain" id="PRO_0000330173" description="NADH-cytochrome b5 reductase 2">
    <location>
        <begin position="1"/>
        <end position="323"/>
    </location>
</feature>
<feature type="transmembrane region" description="Helical" evidence="2">
    <location>
        <begin position="30"/>
        <end position="46"/>
    </location>
</feature>
<feature type="domain" description="FAD-binding FR-type" evidence="3">
    <location>
        <begin position="72"/>
        <end position="177"/>
    </location>
</feature>
<feature type="binding site" evidence="1">
    <location>
        <begin position="180"/>
        <end position="215"/>
    </location>
    <ligand>
        <name>FAD</name>
        <dbReference type="ChEBI" id="CHEBI:57692"/>
    </ligand>
</feature>
<gene>
    <name type="primary">mcr1</name>
    <name type="ORF">AO090003000873</name>
</gene>
<dbReference type="EC" id="1.6.2.2"/>
<dbReference type="EMBL" id="BA000050">
    <property type="protein sequence ID" value="BAE57997.1"/>
    <property type="molecule type" value="Genomic_DNA"/>
</dbReference>
<dbReference type="RefSeq" id="XP_001819999.1">
    <property type="nucleotide sequence ID" value="XM_001819947.2"/>
</dbReference>
<dbReference type="SMR" id="Q2UKB8"/>
<dbReference type="STRING" id="510516.Q2UKB8"/>
<dbReference type="EnsemblFungi" id="BAE57997">
    <property type="protein sequence ID" value="BAE57997"/>
    <property type="gene ID" value="AO090003000873"/>
</dbReference>
<dbReference type="GeneID" id="5991982"/>
<dbReference type="KEGG" id="aor:AO090003000873"/>
<dbReference type="VEuPathDB" id="FungiDB:AO090003000873"/>
<dbReference type="HOGENOM" id="CLU_003827_9_1_1"/>
<dbReference type="OMA" id="KGPEMQK"/>
<dbReference type="OrthoDB" id="60432at5052"/>
<dbReference type="Proteomes" id="UP000006564">
    <property type="component" value="Chromosome 2"/>
</dbReference>
<dbReference type="GO" id="GO:0005741">
    <property type="term" value="C:mitochondrial outer membrane"/>
    <property type="evidence" value="ECO:0007669"/>
    <property type="project" value="UniProtKB-SubCell"/>
</dbReference>
<dbReference type="GO" id="GO:0004128">
    <property type="term" value="F:cytochrome-b5 reductase activity, acting on NAD(P)H"/>
    <property type="evidence" value="ECO:0007669"/>
    <property type="project" value="UniProtKB-EC"/>
</dbReference>
<dbReference type="GO" id="GO:0006696">
    <property type="term" value="P:ergosterol biosynthetic process"/>
    <property type="evidence" value="ECO:0007669"/>
    <property type="project" value="TreeGrafter"/>
</dbReference>
<dbReference type="CDD" id="cd06183">
    <property type="entry name" value="cyt_b5_reduct_like"/>
    <property type="match status" value="1"/>
</dbReference>
<dbReference type="FunFam" id="2.40.30.10:FF:000032">
    <property type="entry name" value="NADH-cytochrome b5 reductase"/>
    <property type="match status" value="1"/>
</dbReference>
<dbReference type="FunFam" id="3.40.50.80:FF:000009">
    <property type="entry name" value="NADH-cytochrome b5 reductase"/>
    <property type="match status" value="1"/>
</dbReference>
<dbReference type="Gene3D" id="3.40.50.80">
    <property type="entry name" value="Nucleotide-binding domain of ferredoxin-NADP reductase (FNR) module"/>
    <property type="match status" value="1"/>
</dbReference>
<dbReference type="Gene3D" id="2.40.30.10">
    <property type="entry name" value="Translation factors"/>
    <property type="match status" value="1"/>
</dbReference>
<dbReference type="InterPro" id="IPR001834">
    <property type="entry name" value="CBR-like"/>
</dbReference>
<dbReference type="InterPro" id="IPR008333">
    <property type="entry name" value="Cbr1-like_FAD-bd_dom"/>
</dbReference>
<dbReference type="InterPro" id="IPR017927">
    <property type="entry name" value="FAD-bd_FR_type"/>
</dbReference>
<dbReference type="InterPro" id="IPR001709">
    <property type="entry name" value="Flavoprot_Pyr_Nucl_cyt_Rdtase"/>
</dbReference>
<dbReference type="InterPro" id="IPR039261">
    <property type="entry name" value="FNR_nucleotide-bd"/>
</dbReference>
<dbReference type="InterPro" id="IPR001433">
    <property type="entry name" value="OxRdtase_FAD/NAD-bd"/>
</dbReference>
<dbReference type="InterPro" id="IPR017938">
    <property type="entry name" value="Riboflavin_synthase-like_b-brl"/>
</dbReference>
<dbReference type="PANTHER" id="PTHR19370">
    <property type="entry name" value="NADH-CYTOCHROME B5 REDUCTASE"/>
    <property type="match status" value="1"/>
</dbReference>
<dbReference type="PANTHER" id="PTHR19370:SF171">
    <property type="entry name" value="NADH-CYTOCHROME B5 REDUCTASE 2"/>
    <property type="match status" value="1"/>
</dbReference>
<dbReference type="Pfam" id="PF00970">
    <property type="entry name" value="FAD_binding_6"/>
    <property type="match status" value="1"/>
</dbReference>
<dbReference type="Pfam" id="PF00175">
    <property type="entry name" value="NAD_binding_1"/>
    <property type="match status" value="1"/>
</dbReference>
<dbReference type="PRINTS" id="PR00406">
    <property type="entry name" value="CYTB5RDTASE"/>
</dbReference>
<dbReference type="PRINTS" id="PR00371">
    <property type="entry name" value="FPNCR"/>
</dbReference>
<dbReference type="SUPFAM" id="SSF52343">
    <property type="entry name" value="Ferredoxin reductase-like, C-terminal NADP-linked domain"/>
    <property type="match status" value="1"/>
</dbReference>
<dbReference type="SUPFAM" id="SSF63380">
    <property type="entry name" value="Riboflavin synthase domain-like"/>
    <property type="match status" value="1"/>
</dbReference>
<dbReference type="PROSITE" id="PS51384">
    <property type="entry name" value="FAD_FR"/>
    <property type="match status" value="1"/>
</dbReference>
<organism>
    <name type="scientific">Aspergillus oryzae (strain ATCC 42149 / RIB 40)</name>
    <name type="common">Yellow koji mold</name>
    <dbReference type="NCBI Taxonomy" id="510516"/>
    <lineage>
        <taxon>Eukaryota</taxon>
        <taxon>Fungi</taxon>
        <taxon>Dikarya</taxon>
        <taxon>Ascomycota</taxon>
        <taxon>Pezizomycotina</taxon>
        <taxon>Eurotiomycetes</taxon>
        <taxon>Eurotiomycetidae</taxon>
        <taxon>Eurotiales</taxon>
        <taxon>Aspergillaceae</taxon>
        <taxon>Aspergillus</taxon>
        <taxon>Aspergillus subgen. Circumdati</taxon>
    </lineage>
</organism>
<keyword id="KW-0274">FAD</keyword>
<keyword id="KW-0285">Flavoprotein</keyword>
<keyword id="KW-0472">Membrane</keyword>
<keyword id="KW-0496">Mitochondrion</keyword>
<keyword id="KW-1000">Mitochondrion outer membrane</keyword>
<keyword id="KW-0520">NAD</keyword>
<keyword id="KW-0560">Oxidoreductase</keyword>
<keyword id="KW-1185">Reference proteome</keyword>
<keyword id="KW-0812">Transmembrane</keyword>
<keyword id="KW-1133">Transmembrane helix</keyword>
<proteinExistence type="inferred from homology"/>
<evidence type="ECO:0000250" key="1"/>
<evidence type="ECO:0000255" key="2"/>
<evidence type="ECO:0000255" key="3">
    <source>
        <dbReference type="PROSITE-ProRule" id="PRU00716"/>
    </source>
</evidence>
<evidence type="ECO:0000305" key="4"/>
<accession>Q2UKB8</accession>
<sequence length="323" mass="36322">MFARQTFRCAQPLRQSFRKYSTEAPKAKSLAPIYTAVGLTGLSVGLYRYYYGAGATAEAPVERAKVFTGGDQGWVDLKLSEIEVLSHNTKRLRFEFEDKEAVSGVTIASALLTKFKPVGAEKAVLRPYTPTSDEDQPGYLDLVVKVYPNGPMSEHLHSMNVDQRLSFKGPLPKYQWETNKHEHIALIAGGTGITPMYQLIRQIFKNPDDKTKVTLVYGNVTEDDILLKKELQDLENTYPQRFKAFYLLDKPPKEWTGGKGYINKELLKTVLPEPKEENQKIFVCGPPGLYNAVSGNKVSPKDQGELSGILKELGYNKDQVYKF</sequence>
<reference key="1">
    <citation type="journal article" date="2005" name="Nature">
        <title>Genome sequencing and analysis of Aspergillus oryzae.</title>
        <authorList>
            <person name="Machida M."/>
            <person name="Asai K."/>
            <person name="Sano M."/>
            <person name="Tanaka T."/>
            <person name="Kumagai T."/>
            <person name="Terai G."/>
            <person name="Kusumoto K."/>
            <person name="Arima T."/>
            <person name="Akita O."/>
            <person name="Kashiwagi Y."/>
            <person name="Abe K."/>
            <person name="Gomi K."/>
            <person name="Horiuchi H."/>
            <person name="Kitamoto K."/>
            <person name="Kobayashi T."/>
            <person name="Takeuchi M."/>
            <person name="Denning D.W."/>
            <person name="Galagan J.E."/>
            <person name="Nierman W.C."/>
            <person name="Yu J."/>
            <person name="Archer D.B."/>
            <person name="Bennett J.W."/>
            <person name="Bhatnagar D."/>
            <person name="Cleveland T.E."/>
            <person name="Fedorova N.D."/>
            <person name="Gotoh O."/>
            <person name="Horikawa H."/>
            <person name="Hosoyama A."/>
            <person name="Ichinomiya M."/>
            <person name="Igarashi R."/>
            <person name="Iwashita K."/>
            <person name="Juvvadi P.R."/>
            <person name="Kato M."/>
            <person name="Kato Y."/>
            <person name="Kin T."/>
            <person name="Kokubun A."/>
            <person name="Maeda H."/>
            <person name="Maeyama N."/>
            <person name="Maruyama J."/>
            <person name="Nagasaki H."/>
            <person name="Nakajima T."/>
            <person name="Oda K."/>
            <person name="Okada K."/>
            <person name="Paulsen I."/>
            <person name="Sakamoto K."/>
            <person name="Sawano T."/>
            <person name="Takahashi M."/>
            <person name="Takase K."/>
            <person name="Terabayashi Y."/>
            <person name="Wortman J.R."/>
            <person name="Yamada O."/>
            <person name="Yamagata Y."/>
            <person name="Anazawa H."/>
            <person name="Hata Y."/>
            <person name="Koide Y."/>
            <person name="Komori T."/>
            <person name="Koyama Y."/>
            <person name="Minetoki T."/>
            <person name="Suharnan S."/>
            <person name="Tanaka A."/>
            <person name="Isono K."/>
            <person name="Kuhara S."/>
            <person name="Ogasawara N."/>
            <person name="Kikuchi H."/>
        </authorList>
    </citation>
    <scope>NUCLEOTIDE SEQUENCE [LARGE SCALE GENOMIC DNA]</scope>
    <source>
        <strain>ATCC 42149 / RIB 40</strain>
    </source>
</reference>
<name>MCR1_ASPOR</name>
<comment type="function">
    <text evidence="1">May mediate the reduction of outer membrane cytochrome b5.</text>
</comment>
<comment type="catalytic activity">
    <reaction>
        <text>2 Fe(III)-[cytochrome b5] + NADH = 2 Fe(II)-[cytochrome b5] + NAD(+) + H(+)</text>
        <dbReference type="Rhea" id="RHEA:46680"/>
        <dbReference type="Rhea" id="RHEA-COMP:10438"/>
        <dbReference type="Rhea" id="RHEA-COMP:10439"/>
        <dbReference type="ChEBI" id="CHEBI:15378"/>
        <dbReference type="ChEBI" id="CHEBI:29033"/>
        <dbReference type="ChEBI" id="CHEBI:29034"/>
        <dbReference type="ChEBI" id="CHEBI:57540"/>
        <dbReference type="ChEBI" id="CHEBI:57945"/>
        <dbReference type="EC" id="1.6.2.2"/>
    </reaction>
</comment>
<comment type="cofactor">
    <cofactor evidence="1">
        <name>FAD</name>
        <dbReference type="ChEBI" id="CHEBI:57692"/>
    </cofactor>
</comment>
<comment type="subcellular location">
    <subcellularLocation>
        <location evidence="1">Mitochondrion outer membrane</location>
        <topology evidence="1">Single-pass membrane protein</topology>
    </subcellularLocation>
</comment>
<comment type="similarity">
    <text evidence="4">Belongs to the flavoprotein pyridine nucleotide cytochrome reductase family.</text>
</comment>
<protein>
    <recommendedName>
        <fullName>NADH-cytochrome b5 reductase 2</fullName>
        <ecNumber>1.6.2.2</ecNumber>
    </recommendedName>
    <alternativeName>
        <fullName>Mitochondrial cytochrome b reductase</fullName>
    </alternativeName>
</protein>